<feature type="chain" id="PRO_0000247251" description="BTB/POZ domain-containing protein KCTD15">
    <location>
        <begin position="1"/>
        <end position="283"/>
    </location>
</feature>
<feature type="domain" description="BTB">
    <location>
        <begin position="56"/>
        <end position="126"/>
    </location>
</feature>
<feature type="region of interest" description="Disordered" evidence="2">
    <location>
        <begin position="1"/>
        <end position="32"/>
    </location>
</feature>
<feature type="compositionally biased region" description="Low complexity" evidence="2">
    <location>
        <begin position="9"/>
        <end position="21"/>
    </location>
</feature>
<feature type="modified residue" description="Phosphoserine" evidence="10">
    <location>
        <position position="31"/>
    </location>
</feature>
<feature type="modified residue" description="Phosphoserine" evidence="10 11 12 13">
    <location>
        <position position="35"/>
    </location>
</feature>
<feature type="modified residue" description="Phosphoserine" evidence="10 12">
    <location>
        <position position="38"/>
    </location>
</feature>
<feature type="splice variant" id="VSP_019958" description="In isoform 2." evidence="7">
    <original>VLE</original>
    <variation>DVL</variation>
    <location>
        <begin position="232"/>
        <end position="234"/>
    </location>
</feature>
<feature type="splice variant" id="VSP_019959" description="In isoform 2." evidence="7">
    <location>
        <begin position="235"/>
        <end position="283"/>
    </location>
</feature>
<feature type="sequence variant" id="VAR_027090" description="In dbSNP:rs17849437." evidence="3">
    <original>G</original>
    <variation>S</variation>
    <location>
        <position position="64"/>
    </location>
</feature>
<feature type="sequence variant" id="VAR_089553" description="Found in a patient with frontonasal dysplasia syndrome; likely pathogenic; affects oligomerization and predominantly forms hexamers; loss of interaction with TFAP2A." evidence="6">
    <original>G</original>
    <variation>D</variation>
    <location>
        <position position="88"/>
    </location>
</feature>
<feature type="sequence variant" id="VAR_089554" description="Found in a patient with frontonasal dysplasia syndrome; likely pathogenic; fails to oligomerize and adopts a monomeric state; greatly reduced interaction with TFAP2A." evidence="6">
    <original>D</original>
    <variation>H</variation>
    <location>
        <position position="104"/>
    </location>
</feature>
<feature type="strand" evidence="14">
    <location>
        <begin position="58"/>
        <end position="62"/>
    </location>
</feature>
<feature type="strand" evidence="14">
    <location>
        <begin position="65"/>
        <end position="69"/>
    </location>
</feature>
<feature type="helix" evidence="14">
    <location>
        <begin position="71"/>
        <end position="74"/>
    </location>
</feature>
<feature type="helix" evidence="14">
    <location>
        <begin position="81"/>
        <end position="86"/>
    </location>
</feature>
<feature type="strand" evidence="14">
    <location>
        <begin position="92"/>
        <end position="95"/>
    </location>
</feature>
<feature type="strand" evidence="14">
    <location>
        <begin position="101"/>
        <end position="103"/>
    </location>
</feature>
<feature type="turn" evidence="14">
    <location>
        <begin position="107"/>
        <end position="109"/>
    </location>
</feature>
<feature type="helix" evidence="14">
    <location>
        <begin position="110"/>
        <end position="119"/>
    </location>
</feature>
<feature type="helix" evidence="14">
    <location>
        <begin position="131"/>
        <end position="140"/>
    </location>
</feature>
<feature type="helix" evidence="14">
    <location>
        <begin position="144"/>
        <end position="158"/>
    </location>
</feature>
<evidence type="ECO:0000250" key="1">
    <source>
        <dbReference type="UniProtKB" id="Q6DC02"/>
    </source>
</evidence>
<evidence type="ECO:0000256" key="2">
    <source>
        <dbReference type="SAM" id="MobiDB-lite"/>
    </source>
</evidence>
<evidence type="ECO:0000269" key="3">
    <source>
    </source>
</evidence>
<evidence type="ECO:0000269" key="4">
    <source>
    </source>
</evidence>
<evidence type="ECO:0000269" key="5">
    <source>
    </source>
</evidence>
<evidence type="ECO:0000269" key="6">
    <source>
    </source>
</evidence>
<evidence type="ECO:0000303" key="7">
    <source>
    </source>
</evidence>
<evidence type="ECO:0007744" key="8">
    <source>
        <dbReference type="PDB" id="8PNM"/>
    </source>
</evidence>
<evidence type="ECO:0007744" key="9">
    <source>
        <dbReference type="PDB" id="8PNR"/>
    </source>
</evidence>
<evidence type="ECO:0007744" key="10">
    <source>
    </source>
</evidence>
<evidence type="ECO:0007744" key="11">
    <source>
    </source>
</evidence>
<evidence type="ECO:0007744" key="12">
    <source>
    </source>
</evidence>
<evidence type="ECO:0007744" key="13">
    <source>
    </source>
</evidence>
<evidence type="ECO:0007829" key="14">
    <source>
        <dbReference type="PDB" id="8PNM"/>
    </source>
</evidence>
<gene>
    <name type="primary">KCTD15</name>
</gene>
<name>KCD15_HUMAN</name>
<proteinExistence type="evidence at protein level"/>
<comment type="function">
    <text evidence="1 4">During embryonic development, it is involved in neural crest formation (By similarity). Inhibits AP2 transcriptional activity by interaction with its activation domain (PubMed:23382213).</text>
</comment>
<comment type="subunit">
    <text evidence="4 5 6">Forms oligomers, predominantly homopentamers (PubMed:38296633). Interacts with KCTD1, probably forming heteropentamers depending on its abundance in a cell-type dependent manner (PubMed:38113115). Interacts with TFAP2A; this interaction inhibits TFAP2A transcriptional activation (PubMed:23382213, PubMed:38296633).</text>
</comment>
<comment type="interaction">
    <interactant intactId="EBI-715783">
        <id>Q96SI1</id>
    </interactant>
    <interactant intactId="EBI-9027502">
        <id>Q719H9</id>
        <label>KCTD1</label>
    </interactant>
    <organismsDiffer>false</organismsDiffer>
    <experiments>3</experiments>
</comment>
<comment type="interaction">
    <interactant intactId="EBI-715783">
        <id>Q96SI1</id>
    </interactant>
    <interactant intactId="EBI-715783">
        <id>Q96SI1</id>
        <label>KCTD15</label>
    </interactant>
    <organismsDiffer>false</organismsDiffer>
    <experiments>2</experiments>
</comment>
<comment type="interaction">
    <interactant intactId="EBI-715783">
        <id>Q96SI1</id>
    </interactant>
    <interactant intactId="EBI-945833">
        <id>Q7Z3S9</id>
        <label>NOTCH2NLA</label>
    </interactant>
    <organismsDiffer>false</organismsDiffer>
    <experiments>3</experiments>
</comment>
<comment type="interaction">
    <interactant intactId="EBI-12382297">
        <id>Q96SI1-2</id>
    </interactant>
    <interactant intactId="EBI-21535880">
        <id>Q92870-2</id>
        <label>APBB2</label>
    </interactant>
    <organismsDiffer>false</organismsDiffer>
    <experiments>3</experiments>
</comment>
<comment type="interaction">
    <interactant intactId="EBI-12382297">
        <id>Q96SI1-2</id>
    </interactant>
    <interactant intactId="EBI-930964">
        <id>P54253</id>
        <label>ATXN1</label>
    </interactant>
    <organismsDiffer>false</organismsDiffer>
    <experiments>6</experiments>
</comment>
<comment type="interaction">
    <interactant intactId="EBI-12382297">
        <id>Q96SI1-2</id>
    </interactant>
    <interactant intactId="EBI-3867333">
        <id>A8MQ03</id>
        <label>CYSRT1</label>
    </interactant>
    <organismsDiffer>false</organismsDiffer>
    <experiments>3</experiments>
</comment>
<comment type="interaction">
    <interactant intactId="EBI-12382297">
        <id>Q96SI1-2</id>
    </interactant>
    <interactant intactId="EBI-352682">
        <id>P04792</id>
        <label>HSPB1</label>
    </interactant>
    <organismsDiffer>false</organismsDiffer>
    <experiments>3</experiments>
</comment>
<comment type="interaction">
    <interactant intactId="EBI-12382297">
        <id>Q96SI1-2</id>
    </interactant>
    <interactant intactId="EBI-466029">
        <id>P42858</id>
        <label>HTT</label>
    </interactant>
    <organismsDiffer>false</organismsDiffer>
    <experiments>6</experiments>
</comment>
<comment type="interaction">
    <interactant intactId="EBI-12382297">
        <id>Q96SI1-2</id>
    </interactant>
    <interactant intactId="EBI-9027502">
        <id>Q719H9</id>
        <label>KCTD1</label>
    </interactant>
    <organismsDiffer>false</organismsDiffer>
    <experiments>6</experiments>
</comment>
<comment type="interaction">
    <interactant intactId="EBI-12382297">
        <id>Q96SI1-2</id>
    </interactant>
    <interactant intactId="EBI-10975473">
        <id>O60333-2</id>
        <label>KIF1B</label>
    </interactant>
    <organismsDiffer>false</organismsDiffer>
    <experiments>3</experiments>
</comment>
<comment type="interaction">
    <interactant intactId="EBI-12382297">
        <id>Q96SI1-2</id>
    </interactant>
    <interactant intactId="EBI-22310682">
        <id>P0DPK4</id>
        <label>NOTCH2NLC</label>
    </interactant>
    <organismsDiffer>false</organismsDiffer>
    <experiments>3</experiments>
</comment>
<comment type="interaction">
    <interactant intactId="EBI-12382297">
        <id>Q96SI1-2</id>
    </interactant>
    <interactant intactId="EBI-12025760">
        <id>Q86UR1-2</id>
        <label>NOXA1</label>
    </interactant>
    <organismsDiffer>false</organismsDiffer>
    <experiments>3</experiments>
</comment>
<comment type="interaction">
    <interactant intactId="EBI-12382297">
        <id>Q96SI1-2</id>
    </interactant>
    <interactant intactId="EBI-741158">
        <id>Q96HA8</id>
        <label>NTAQ1</label>
    </interactant>
    <organismsDiffer>false</organismsDiffer>
    <experiments>3</experiments>
</comment>
<comment type="interaction">
    <interactant intactId="EBI-12382297">
        <id>Q96SI1-2</id>
    </interactant>
    <interactant intactId="EBI-752057">
        <id>Q7Z412</id>
        <label>PEX26</label>
    </interactant>
    <organismsDiffer>false</organismsDiffer>
    <experiments>3</experiments>
</comment>
<comment type="interaction">
    <interactant intactId="EBI-12382297">
        <id>Q96SI1-2</id>
    </interactant>
    <interactant intactId="EBI-50433196">
        <id>A0A6Q8PF08</id>
        <label>PMP22</label>
    </interactant>
    <organismsDiffer>false</organismsDiffer>
    <experiments>3</experiments>
</comment>
<comment type="interaction">
    <interactant intactId="EBI-12382297">
        <id>Q96SI1-2</id>
    </interactant>
    <interactant intactId="EBI-749195">
        <id>P60891</id>
        <label>PRPS1</label>
    </interactant>
    <organismsDiffer>false</organismsDiffer>
    <experiments>3</experiments>
</comment>
<comment type="interaction">
    <interactant intactId="EBI-12382297">
        <id>Q96SI1-2</id>
    </interactant>
    <interactant intactId="EBI-372899">
        <id>Q13148</id>
        <label>TARDBP</label>
    </interactant>
    <organismsDiffer>false</organismsDiffer>
    <experiments>6</experiments>
</comment>
<comment type="interaction">
    <interactant intactId="EBI-12382297">
        <id>Q96SI1-2</id>
    </interactant>
    <interactant intactId="EBI-711909">
        <id>P02766</id>
        <label>TTR</label>
    </interactant>
    <organismsDiffer>false</organismsDiffer>
    <experiments>3</experiments>
</comment>
<comment type="interaction">
    <interactant intactId="EBI-12382297">
        <id>Q96SI1-2</id>
    </interactant>
    <interactant intactId="EBI-720609">
        <id>O76024</id>
        <label>WFS1</label>
    </interactant>
    <organismsDiffer>false</organismsDiffer>
    <experiments>3</experiments>
</comment>
<comment type="subcellular location">
    <subcellularLocation>
        <location evidence="5">Nucleus</location>
    </subcellularLocation>
</comment>
<comment type="alternative products">
    <event type="alternative splicing"/>
    <isoform>
        <id>Q96SI1-1</id>
        <name>1</name>
        <sequence type="displayed"/>
    </isoform>
    <isoform>
        <id>Q96SI1-2</id>
        <name>2</name>
        <sequence type="described" ref="VSP_019958 VSP_019959"/>
    </isoform>
</comment>
<comment type="disease">
    <text evidence="6">Defects in KCTD15, affecting the BTB domain of the protein, may be the cause of a distinctive frontonasal dysplasia syndrome characterized by a midline mass containing fatty or hamartomatous tissue that overlies the frontonasal region, sparse scalp hair, and aplasia cutis of the scalp. Additionally, congenital heart disease has been observed in one family.</text>
</comment>
<organism>
    <name type="scientific">Homo sapiens</name>
    <name type="common">Human</name>
    <dbReference type="NCBI Taxonomy" id="9606"/>
    <lineage>
        <taxon>Eukaryota</taxon>
        <taxon>Metazoa</taxon>
        <taxon>Chordata</taxon>
        <taxon>Craniata</taxon>
        <taxon>Vertebrata</taxon>
        <taxon>Euteleostomi</taxon>
        <taxon>Mammalia</taxon>
        <taxon>Eutheria</taxon>
        <taxon>Euarchontoglires</taxon>
        <taxon>Primates</taxon>
        <taxon>Haplorrhini</taxon>
        <taxon>Catarrhini</taxon>
        <taxon>Hominidae</taxon>
        <taxon>Homo</taxon>
    </lineage>
</organism>
<accession>Q96SI1</accession>
<accession>A8K600</accession>
<accession>Q9BVI6</accession>
<dbReference type="EMBL" id="AK027901">
    <property type="protein sequence ID" value="BAB55443.1"/>
    <property type="molecule type" value="mRNA"/>
</dbReference>
<dbReference type="EMBL" id="AK291465">
    <property type="protein sequence ID" value="BAF84154.1"/>
    <property type="molecule type" value="mRNA"/>
</dbReference>
<dbReference type="EMBL" id="BC001185">
    <property type="protein sequence ID" value="AAH01185.1"/>
    <property type="molecule type" value="mRNA"/>
</dbReference>
<dbReference type="EMBL" id="BC009335">
    <property type="protein sequence ID" value="AAH09335.1"/>
    <property type="molecule type" value="mRNA"/>
</dbReference>
<dbReference type="CCDS" id="CCDS12434.1">
    <molecule id="Q96SI1-2"/>
</dbReference>
<dbReference type="CCDS" id="CCDS46039.1">
    <molecule id="Q96SI1-1"/>
</dbReference>
<dbReference type="RefSeq" id="NP_001123466.1">
    <molecule id="Q96SI1-1"/>
    <property type="nucleotide sequence ID" value="NM_001129994.2"/>
</dbReference>
<dbReference type="RefSeq" id="NP_001123467.1">
    <molecule id="Q96SI1-1"/>
    <property type="nucleotide sequence ID" value="NM_001129995.2"/>
</dbReference>
<dbReference type="RefSeq" id="NP_076981.2">
    <molecule id="Q96SI1-2"/>
    <property type="nucleotide sequence ID" value="NM_024076.3"/>
</dbReference>
<dbReference type="RefSeq" id="XP_011525598.2">
    <molecule id="Q96SI1-1"/>
    <property type="nucleotide sequence ID" value="XM_011527296.3"/>
</dbReference>
<dbReference type="RefSeq" id="XP_011525599.1">
    <molecule id="Q96SI1-1"/>
    <property type="nucleotide sequence ID" value="XM_011527297.3"/>
</dbReference>
<dbReference type="RefSeq" id="XP_011525600.1">
    <molecule id="Q96SI1-1"/>
    <property type="nucleotide sequence ID" value="XM_011527298.3"/>
</dbReference>
<dbReference type="RefSeq" id="XP_016882772.1">
    <molecule id="Q96SI1-1"/>
    <property type="nucleotide sequence ID" value="XM_017027283.2"/>
</dbReference>
<dbReference type="RefSeq" id="XP_047295349.1">
    <molecule id="Q96SI1-1"/>
    <property type="nucleotide sequence ID" value="XM_047439393.1"/>
</dbReference>
<dbReference type="RefSeq" id="XP_047295350.1">
    <molecule id="Q96SI1-1"/>
    <property type="nucleotide sequence ID" value="XM_047439394.1"/>
</dbReference>
<dbReference type="RefSeq" id="XP_047295351.1">
    <molecule id="Q96SI1-1"/>
    <property type="nucleotide sequence ID" value="XM_047439395.1"/>
</dbReference>
<dbReference type="RefSeq" id="XP_047295352.1">
    <molecule id="Q96SI1-1"/>
    <property type="nucleotide sequence ID" value="XM_047439396.1"/>
</dbReference>
<dbReference type="RefSeq" id="XP_047295353.1">
    <molecule id="Q96SI1-1"/>
    <property type="nucleotide sequence ID" value="XM_047439397.1"/>
</dbReference>
<dbReference type="RefSeq" id="XP_047295354.1">
    <molecule id="Q96SI1-1"/>
    <property type="nucleotide sequence ID" value="XM_047439398.1"/>
</dbReference>
<dbReference type="RefSeq" id="XP_047295355.1">
    <molecule id="Q96SI1-1"/>
    <property type="nucleotide sequence ID" value="XM_047439399.1"/>
</dbReference>
<dbReference type="RefSeq" id="XP_047295356.1">
    <molecule id="Q96SI1-2"/>
    <property type="nucleotide sequence ID" value="XM_047439400.1"/>
</dbReference>
<dbReference type="RefSeq" id="XP_047295357.1">
    <molecule id="Q96SI1-2"/>
    <property type="nucleotide sequence ID" value="XM_047439401.1"/>
</dbReference>
<dbReference type="RefSeq" id="XP_047295358.1">
    <molecule id="Q96SI1-2"/>
    <property type="nucleotide sequence ID" value="XM_047439402.1"/>
</dbReference>
<dbReference type="RefSeq" id="XP_054178044.1">
    <molecule id="Q96SI1-1"/>
    <property type="nucleotide sequence ID" value="XM_054322069.1"/>
</dbReference>
<dbReference type="RefSeq" id="XP_054178045.1">
    <molecule id="Q96SI1-1"/>
    <property type="nucleotide sequence ID" value="XM_054322070.1"/>
</dbReference>
<dbReference type="RefSeq" id="XP_054178046.1">
    <molecule id="Q96SI1-1"/>
    <property type="nucleotide sequence ID" value="XM_054322071.1"/>
</dbReference>
<dbReference type="RefSeq" id="XP_054178047.1">
    <molecule id="Q96SI1-1"/>
    <property type="nucleotide sequence ID" value="XM_054322072.1"/>
</dbReference>
<dbReference type="RefSeq" id="XP_054178048.1">
    <molecule id="Q96SI1-1"/>
    <property type="nucleotide sequence ID" value="XM_054322073.1"/>
</dbReference>
<dbReference type="RefSeq" id="XP_054178049.1">
    <molecule id="Q96SI1-1"/>
    <property type="nucleotide sequence ID" value="XM_054322074.1"/>
</dbReference>
<dbReference type="RefSeq" id="XP_054178050.1">
    <molecule id="Q96SI1-1"/>
    <property type="nucleotide sequence ID" value="XM_054322075.1"/>
</dbReference>
<dbReference type="RefSeq" id="XP_054178051.1">
    <molecule id="Q96SI1-1"/>
    <property type="nucleotide sequence ID" value="XM_054322076.1"/>
</dbReference>
<dbReference type="RefSeq" id="XP_054178052.1">
    <molecule id="Q96SI1-1"/>
    <property type="nucleotide sequence ID" value="XM_054322077.1"/>
</dbReference>
<dbReference type="RefSeq" id="XP_054178053.1">
    <molecule id="Q96SI1-1"/>
    <property type="nucleotide sequence ID" value="XM_054322078.1"/>
</dbReference>
<dbReference type="RefSeq" id="XP_054178054.1">
    <molecule id="Q96SI1-1"/>
    <property type="nucleotide sequence ID" value="XM_054322079.1"/>
</dbReference>
<dbReference type="RefSeq" id="XP_054178055.1">
    <molecule id="Q96SI1-2"/>
    <property type="nucleotide sequence ID" value="XM_054322080.1"/>
</dbReference>
<dbReference type="RefSeq" id="XP_054178056.1">
    <molecule id="Q96SI1-2"/>
    <property type="nucleotide sequence ID" value="XM_054322081.1"/>
</dbReference>
<dbReference type="RefSeq" id="XP_054178057.1">
    <molecule id="Q96SI1-2"/>
    <property type="nucleotide sequence ID" value="XM_054322082.1"/>
</dbReference>
<dbReference type="PDB" id="8PNM">
    <property type="method" value="X-ray"/>
    <property type="resolution" value="1.94 A"/>
    <property type="chains" value="A/B/C/D/E/F/G/H/I/J/K/L=52-165"/>
</dbReference>
<dbReference type="PDB" id="8PNR">
    <property type="method" value="X-ray"/>
    <property type="resolution" value="2.25 A"/>
    <property type="chains" value="A/B/C/D/E/F/G/H/I/J/K/L=51-165"/>
</dbReference>
<dbReference type="PDBsum" id="8PNM"/>
<dbReference type="PDBsum" id="8PNR"/>
<dbReference type="SMR" id="Q96SI1"/>
<dbReference type="BioGRID" id="122506">
    <property type="interactions" value="63"/>
</dbReference>
<dbReference type="FunCoup" id="Q96SI1">
    <property type="interactions" value="323"/>
</dbReference>
<dbReference type="IntAct" id="Q96SI1">
    <property type="interactions" value="36"/>
</dbReference>
<dbReference type="MINT" id="Q96SI1"/>
<dbReference type="STRING" id="9606.ENSP00000394390"/>
<dbReference type="GlyGen" id="Q96SI1">
    <property type="glycosylation" value="1 site"/>
</dbReference>
<dbReference type="iPTMnet" id="Q96SI1"/>
<dbReference type="PhosphoSitePlus" id="Q96SI1"/>
<dbReference type="BioMuta" id="KCTD15"/>
<dbReference type="DMDM" id="74732704"/>
<dbReference type="jPOST" id="Q96SI1"/>
<dbReference type="MassIVE" id="Q96SI1"/>
<dbReference type="PaxDb" id="9606-ENSP00000394390"/>
<dbReference type="PeptideAtlas" id="Q96SI1"/>
<dbReference type="ProteomicsDB" id="78113">
    <molecule id="Q96SI1-1"/>
</dbReference>
<dbReference type="ProteomicsDB" id="78114">
    <molecule id="Q96SI1-2"/>
</dbReference>
<dbReference type="Pumba" id="Q96SI1"/>
<dbReference type="Antibodypedia" id="29083">
    <property type="antibodies" value="253 antibodies from 29 providers"/>
</dbReference>
<dbReference type="DNASU" id="79047"/>
<dbReference type="Ensembl" id="ENST00000284006.10">
    <molecule id="Q96SI1-2"/>
    <property type="protein sequence ID" value="ENSP00000284006.4"/>
    <property type="gene ID" value="ENSG00000153885.15"/>
</dbReference>
<dbReference type="Ensembl" id="ENST00000430256.3">
    <molecule id="Q96SI1-1"/>
    <property type="protein sequence ID" value="ENSP00000394390.1"/>
    <property type="gene ID" value="ENSG00000153885.15"/>
</dbReference>
<dbReference type="Ensembl" id="ENST00000588881.5">
    <molecule id="Q96SI1-1"/>
    <property type="protein sequence ID" value="ENSP00000464812.1"/>
    <property type="gene ID" value="ENSG00000153885.15"/>
</dbReference>
<dbReference type="Ensembl" id="ENST00000589786.5">
    <molecule id="Q96SI1-1"/>
    <property type="protein sequence ID" value="ENSP00000467612.1"/>
    <property type="gene ID" value="ENSG00000153885.15"/>
</dbReference>
<dbReference type="Ensembl" id="ENST00000683859.1">
    <molecule id="Q96SI1-1"/>
    <property type="protein sequence ID" value="ENSP00000508199.1"/>
    <property type="gene ID" value="ENSG00000153885.15"/>
</dbReference>
<dbReference type="GeneID" id="79047"/>
<dbReference type="KEGG" id="hsa:79047"/>
<dbReference type="MANE-Select" id="ENST00000683859.1">
    <property type="protein sequence ID" value="ENSP00000508199.1"/>
    <property type="RefSeq nucleotide sequence ID" value="NM_001129994.2"/>
    <property type="RefSeq protein sequence ID" value="NP_001123466.1"/>
</dbReference>
<dbReference type="UCSC" id="uc002nuv.4">
    <molecule id="Q96SI1-1"/>
    <property type="organism name" value="human"/>
</dbReference>
<dbReference type="AGR" id="HGNC:23297"/>
<dbReference type="CTD" id="79047"/>
<dbReference type="DisGeNET" id="79047"/>
<dbReference type="GeneCards" id="KCTD15"/>
<dbReference type="HGNC" id="HGNC:23297">
    <property type="gene designation" value="KCTD15"/>
</dbReference>
<dbReference type="HPA" id="ENSG00000153885">
    <property type="expression patterns" value="Low tissue specificity"/>
</dbReference>
<dbReference type="MIM" id="615240">
    <property type="type" value="gene"/>
</dbReference>
<dbReference type="neXtProt" id="NX_Q96SI1"/>
<dbReference type="OpenTargets" id="ENSG00000153885"/>
<dbReference type="PharmGKB" id="PA134916319"/>
<dbReference type="VEuPathDB" id="HostDB:ENSG00000153885"/>
<dbReference type="eggNOG" id="KOG2723">
    <property type="taxonomic scope" value="Eukaryota"/>
</dbReference>
<dbReference type="GeneTree" id="ENSGT00940000159496"/>
<dbReference type="HOGENOM" id="CLU_061268_1_0_1"/>
<dbReference type="InParanoid" id="Q96SI1"/>
<dbReference type="OMA" id="FCDCIAV"/>
<dbReference type="OrthoDB" id="2414723at2759"/>
<dbReference type="PAN-GO" id="Q96SI1">
    <property type="GO annotations" value="0 GO annotations based on evolutionary models"/>
</dbReference>
<dbReference type="PhylomeDB" id="Q96SI1"/>
<dbReference type="PathwayCommons" id="Q96SI1"/>
<dbReference type="Reactome" id="R-HSA-8866904">
    <property type="pathway name" value="Negative regulation of activity of TFAP2 (AP-2) family transcription factors"/>
</dbReference>
<dbReference type="SignaLink" id="Q96SI1"/>
<dbReference type="BioGRID-ORCS" id="79047">
    <property type="hits" value="18 hits in 1163 CRISPR screens"/>
</dbReference>
<dbReference type="ChiTaRS" id="KCTD15">
    <property type="organism name" value="human"/>
</dbReference>
<dbReference type="GeneWiki" id="KCTD15"/>
<dbReference type="GenomeRNAi" id="79047"/>
<dbReference type="Pharos" id="Q96SI1">
    <property type="development level" value="Tbio"/>
</dbReference>
<dbReference type="PRO" id="PR:Q96SI1"/>
<dbReference type="Proteomes" id="UP000005640">
    <property type="component" value="Chromosome 19"/>
</dbReference>
<dbReference type="RNAct" id="Q96SI1">
    <property type="molecule type" value="protein"/>
</dbReference>
<dbReference type="Bgee" id="ENSG00000153885">
    <property type="expression patterns" value="Expressed in ventricular zone and 181 other cell types or tissues"/>
</dbReference>
<dbReference type="ExpressionAtlas" id="Q96SI1">
    <property type="expression patterns" value="baseline and differential"/>
</dbReference>
<dbReference type="GO" id="GO:0005634">
    <property type="term" value="C:nucleus"/>
    <property type="evidence" value="ECO:0007669"/>
    <property type="project" value="UniProtKB-SubCell"/>
</dbReference>
<dbReference type="GO" id="GO:0042802">
    <property type="term" value="F:identical protein binding"/>
    <property type="evidence" value="ECO:0000353"/>
    <property type="project" value="IntAct"/>
</dbReference>
<dbReference type="GO" id="GO:0003714">
    <property type="term" value="F:transcription corepressor activity"/>
    <property type="evidence" value="ECO:0000318"/>
    <property type="project" value="GO_Central"/>
</dbReference>
<dbReference type="GO" id="GO:0045892">
    <property type="term" value="P:negative regulation of DNA-templated transcription"/>
    <property type="evidence" value="ECO:0000318"/>
    <property type="project" value="GO_Central"/>
</dbReference>
<dbReference type="GO" id="GO:0051260">
    <property type="term" value="P:protein homooligomerization"/>
    <property type="evidence" value="ECO:0007669"/>
    <property type="project" value="InterPro"/>
</dbReference>
<dbReference type="CDD" id="cd18388">
    <property type="entry name" value="BTB_POZ_KCTD15"/>
    <property type="match status" value="1"/>
</dbReference>
<dbReference type="FunFam" id="3.30.710.10:FF:000003">
    <property type="entry name" value="BTB/POZ domain-containing protein KCTD6 isoform X2"/>
    <property type="match status" value="1"/>
</dbReference>
<dbReference type="Gene3D" id="3.30.710.10">
    <property type="entry name" value="Potassium Channel Kv1.1, Chain A"/>
    <property type="match status" value="1"/>
</dbReference>
<dbReference type="InterPro" id="IPR000210">
    <property type="entry name" value="BTB/POZ_dom"/>
</dbReference>
<dbReference type="InterPro" id="IPR048595">
    <property type="entry name" value="KCTD1-15-like_C"/>
</dbReference>
<dbReference type="InterPro" id="IPR045904">
    <property type="entry name" value="KCTD15_T1-type_BTB"/>
</dbReference>
<dbReference type="InterPro" id="IPR011333">
    <property type="entry name" value="SKP1/BTB/POZ_sf"/>
</dbReference>
<dbReference type="InterPro" id="IPR003131">
    <property type="entry name" value="T1-type_BTB"/>
</dbReference>
<dbReference type="PANTHER" id="PTHR14499:SF27">
    <property type="entry name" value="BTB_POZ DOMAIN-CONTAINING PROTEIN KCTD15"/>
    <property type="match status" value="1"/>
</dbReference>
<dbReference type="PANTHER" id="PTHR14499">
    <property type="entry name" value="POTASSIUM CHANNEL TETRAMERIZATION DOMAIN-CONTAINING"/>
    <property type="match status" value="1"/>
</dbReference>
<dbReference type="Pfam" id="PF02214">
    <property type="entry name" value="BTB_2"/>
    <property type="match status" value="1"/>
</dbReference>
<dbReference type="Pfam" id="PF20871">
    <property type="entry name" value="KCTD1-15_CTD"/>
    <property type="match status" value="1"/>
</dbReference>
<dbReference type="SMART" id="SM00225">
    <property type="entry name" value="BTB"/>
    <property type="match status" value="1"/>
</dbReference>
<dbReference type="SUPFAM" id="SSF54695">
    <property type="entry name" value="POZ domain"/>
    <property type="match status" value="1"/>
</dbReference>
<keyword id="KW-0002">3D-structure</keyword>
<keyword id="KW-0025">Alternative splicing</keyword>
<keyword id="KW-0217">Developmental protein</keyword>
<keyword id="KW-0225">Disease variant</keyword>
<keyword id="KW-0539">Nucleus</keyword>
<keyword id="KW-0597">Phosphoprotein</keyword>
<keyword id="KW-1267">Proteomics identification</keyword>
<keyword id="KW-1185">Reference proteome</keyword>
<sequence length="283" mass="31942">MPHRKERPSGSSLHTHGSTGTAEGGNMSRLSLTRSPVSPLAAQGIPLPAQLTKSNAPVHIDVGGHMYTSSLATLTKYPDSRISRLFNGTEPIVLDSLKQHYFIDRDGEIFRYVLSFLRTSKLLLPDDFKDFSLLYEEARYYQLQPMVRELERWQQEQEQRRRSRACDCLVVRVTPDLGERIALSGEKALIEEVFPETGDVMCNSVNAGWNQDPTHVIRFPLNGYCRLNSVQVLERLFQRGFSVAASCGGGVDSSQFSEYVLCREERRPQPTPTAVRIKQEPLD</sequence>
<reference key="1">
    <citation type="journal article" date="2004" name="Nat. Genet.">
        <title>Complete sequencing and characterization of 21,243 full-length human cDNAs.</title>
        <authorList>
            <person name="Ota T."/>
            <person name="Suzuki Y."/>
            <person name="Nishikawa T."/>
            <person name="Otsuki T."/>
            <person name="Sugiyama T."/>
            <person name="Irie R."/>
            <person name="Wakamatsu A."/>
            <person name="Hayashi K."/>
            <person name="Sato H."/>
            <person name="Nagai K."/>
            <person name="Kimura K."/>
            <person name="Makita H."/>
            <person name="Sekine M."/>
            <person name="Obayashi M."/>
            <person name="Nishi T."/>
            <person name="Shibahara T."/>
            <person name="Tanaka T."/>
            <person name="Ishii S."/>
            <person name="Yamamoto J."/>
            <person name="Saito K."/>
            <person name="Kawai Y."/>
            <person name="Isono Y."/>
            <person name="Nakamura Y."/>
            <person name="Nagahari K."/>
            <person name="Murakami K."/>
            <person name="Yasuda T."/>
            <person name="Iwayanagi T."/>
            <person name="Wagatsuma M."/>
            <person name="Shiratori A."/>
            <person name="Sudo H."/>
            <person name="Hosoiri T."/>
            <person name="Kaku Y."/>
            <person name="Kodaira H."/>
            <person name="Kondo H."/>
            <person name="Sugawara M."/>
            <person name="Takahashi M."/>
            <person name="Kanda K."/>
            <person name="Yokoi T."/>
            <person name="Furuya T."/>
            <person name="Kikkawa E."/>
            <person name="Omura Y."/>
            <person name="Abe K."/>
            <person name="Kamihara K."/>
            <person name="Katsuta N."/>
            <person name="Sato K."/>
            <person name="Tanikawa M."/>
            <person name="Yamazaki M."/>
            <person name="Ninomiya K."/>
            <person name="Ishibashi T."/>
            <person name="Yamashita H."/>
            <person name="Murakawa K."/>
            <person name="Fujimori K."/>
            <person name="Tanai H."/>
            <person name="Kimata M."/>
            <person name="Watanabe M."/>
            <person name="Hiraoka S."/>
            <person name="Chiba Y."/>
            <person name="Ishida S."/>
            <person name="Ono Y."/>
            <person name="Takiguchi S."/>
            <person name="Watanabe S."/>
            <person name="Yosida M."/>
            <person name="Hotuta T."/>
            <person name="Kusano J."/>
            <person name="Kanehori K."/>
            <person name="Takahashi-Fujii A."/>
            <person name="Hara H."/>
            <person name="Tanase T.-O."/>
            <person name="Nomura Y."/>
            <person name="Togiya S."/>
            <person name="Komai F."/>
            <person name="Hara R."/>
            <person name="Takeuchi K."/>
            <person name="Arita M."/>
            <person name="Imose N."/>
            <person name="Musashino K."/>
            <person name="Yuuki H."/>
            <person name="Oshima A."/>
            <person name="Sasaki N."/>
            <person name="Aotsuka S."/>
            <person name="Yoshikawa Y."/>
            <person name="Matsunawa H."/>
            <person name="Ichihara T."/>
            <person name="Shiohata N."/>
            <person name="Sano S."/>
            <person name="Moriya S."/>
            <person name="Momiyama H."/>
            <person name="Satoh N."/>
            <person name="Takami S."/>
            <person name="Terashima Y."/>
            <person name="Suzuki O."/>
            <person name="Nakagawa S."/>
            <person name="Senoh A."/>
            <person name="Mizoguchi H."/>
            <person name="Goto Y."/>
            <person name="Shimizu F."/>
            <person name="Wakebe H."/>
            <person name="Hishigaki H."/>
            <person name="Watanabe T."/>
            <person name="Sugiyama A."/>
            <person name="Takemoto M."/>
            <person name="Kawakami B."/>
            <person name="Yamazaki M."/>
            <person name="Watanabe K."/>
            <person name="Kumagai A."/>
            <person name="Itakura S."/>
            <person name="Fukuzumi Y."/>
            <person name="Fujimori Y."/>
            <person name="Komiyama M."/>
            <person name="Tashiro H."/>
            <person name="Tanigami A."/>
            <person name="Fujiwara T."/>
            <person name="Ono T."/>
            <person name="Yamada K."/>
            <person name="Fujii Y."/>
            <person name="Ozaki K."/>
            <person name="Hirao M."/>
            <person name="Ohmori Y."/>
            <person name="Kawabata A."/>
            <person name="Hikiji T."/>
            <person name="Kobatake N."/>
            <person name="Inagaki H."/>
            <person name="Ikema Y."/>
            <person name="Okamoto S."/>
            <person name="Okitani R."/>
            <person name="Kawakami T."/>
            <person name="Noguchi S."/>
            <person name="Itoh T."/>
            <person name="Shigeta K."/>
            <person name="Senba T."/>
            <person name="Matsumura K."/>
            <person name="Nakajima Y."/>
            <person name="Mizuno T."/>
            <person name="Morinaga M."/>
            <person name="Sasaki M."/>
            <person name="Togashi T."/>
            <person name="Oyama M."/>
            <person name="Hata H."/>
            <person name="Watanabe M."/>
            <person name="Komatsu T."/>
            <person name="Mizushima-Sugano J."/>
            <person name="Satoh T."/>
            <person name="Shirai Y."/>
            <person name="Takahashi Y."/>
            <person name="Nakagawa K."/>
            <person name="Okumura K."/>
            <person name="Nagase T."/>
            <person name="Nomura N."/>
            <person name="Kikuchi H."/>
            <person name="Masuho Y."/>
            <person name="Yamashita R."/>
            <person name="Nakai K."/>
            <person name="Yada T."/>
            <person name="Nakamura Y."/>
            <person name="Ohara O."/>
            <person name="Isogai T."/>
            <person name="Sugano S."/>
        </authorList>
    </citation>
    <scope>NUCLEOTIDE SEQUENCE [LARGE SCALE MRNA] (ISOFORM 1)</scope>
    <source>
        <tissue>Brain</tissue>
    </source>
</reference>
<reference key="2">
    <citation type="journal article" date="2004" name="Genome Res.">
        <title>The status, quality, and expansion of the NIH full-length cDNA project: the Mammalian Gene Collection (MGC).</title>
        <authorList>
            <consortium name="The MGC Project Team"/>
        </authorList>
    </citation>
    <scope>NUCLEOTIDE SEQUENCE [LARGE SCALE MRNA] (ISOFORM 2)</scope>
    <scope>VARIANT SER-64</scope>
    <source>
        <tissue>Brain</tissue>
    </source>
</reference>
<reference key="3">
    <citation type="journal article" date="2008" name="Proc. Natl. Acad. Sci. U.S.A.">
        <title>A quantitative atlas of mitotic phosphorylation.</title>
        <authorList>
            <person name="Dephoure N."/>
            <person name="Zhou C."/>
            <person name="Villen J."/>
            <person name="Beausoleil S.A."/>
            <person name="Bakalarski C.E."/>
            <person name="Elledge S.J."/>
            <person name="Gygi S.P."/>
        </authorList>
    </citation>
    <scope>PHOSPHORYLATION [LARGE SCALE ANALYSIS] AT SER-31; SER-35 AND SER-38</scope>
    <scope>IDENTIFICATION BY MASS SPECTROMETRY [LARGE SCALE ANALYSIS]</scope>
    <source>
        <tissue>Cervix carcinoma</tissue>
    </source>
</reference>
<reference key="4">
    <citation type="journal article" date="2009" name="Mol. Cell. Proteomics">
        <title>Large-scale proteomics analysis of the human kinome.</title>
        <authorList>
            <person name="Oppermann F.S."/>
            <person name="Gnad F."/>
            <person name="Olsen J.V."/>
            <person name="Hornberger R."/>
            <person name="Greff Z."/>
            <person name="Keri G."/>
            <person name="Mann M."/>
            <person name="Daub H."/>
        </authorList>
    </citation>
    <scope>PHOSPHORYLATION [LARGE SCALE ANALYSIS] AT SER-35</scope>
    <scope>IDENTIFICATION BY MASS SPECTROMETRY [LARGE SCALE ANALYSIS]</scope>
</reference>
<reference key="5">
    <citation type="journal article" date="2010" name="Sci. Signal.">
        <title>Quantitative phosphoproteomics reveals widespread full phosphorylation site occupancy during mitosis.</title>
        <authorList>
            <person name="Olsen J.V."/>
            <person name="Vermeulen M."/>
            <person name="Santamaria A."/>
            <person name="Kumar C."/>
            <person name="Miller M.L."/>
            <person name="Jensen L.J."/>
            <person name="Gnad F."/>
            <person name="Cox J."/>
            <person name="Jensen T.S."/>
            <person name="Nigg E.A."/>
            <person name="Brunak S."/>
            <person name="Mann M."/>
        </authorList>
    </citation>
    <scope>PHOSPHORYLATION [LARGE SCALE ANALYSIS] AT SER-35 AND SER-38</scope>
    <scope>IDENTIFICATION BY MASS SPECTROMETRY [LARGE SCALE ANALYSIS]</scope>
    <source>
        <tissue>Cervix carcinoma</tissue>
    </source>
</reference>
<reference key="6">
    <citation type="journal article" date="2011" name="BMC Syst. Biol.">
        <title>Initial characterization of the human central proteome.</title>
        <authorList>
            <person name="Burkard T.R."/>
            <person name="Planyavsky M."/>
            <person name="Kaupe I."/>
            <person name="Breitwieser F.P."/>
            <person name="Buerckstuemmer T."/>
            <person name="Bennett K.L."/>
            <person name="Superti-Furga G."/>
            <person name="Colinge J."/>
        </authorList>
    </citation>
    <scope>IDENTIFICATION BY MASS SPECTROMETRY [LARGE SCALE ANALYSIS]</scope>
</reference>
<reference key="7">
    <citation type="journal article" date="2013" name="J. Proteome Res.">
        <title>Toward a comprehensive characterization of a human cancer cell phosphoproteome.</title>
        <authorList>
            <person name="Zhou H."/>
            <person name="Di Palma S."/>
            <person name="Preisinger C."/>
            <person name="Peng M."/>
            <person name="Polat A.N."/>
            <person name="Heck A.J."/>
            <person name="Mohammed S."/>
        </authorList>
    </citation>
    <scope>PHOSPHORYLATION [LARGE SCALE ANALYSIS] AT SER-35</scope>
    <scope>IDENTIFICATION BY MASS SPECTROMETRY [LARGE SCALE ANALYSIS]</scope>
    <source>
        <tissue>Cervix carcinoma</tissue>
    </source>
</reference>
<reference key="8">
    <citation type="journal article" date="2013" name="Proc. Natl. Acad. Sci. U.S.A.">
        <title>Inhibition of neural crest formation by Kctd15 involves regulation of transcription factor AP-2.</title>
        <authorList>
            <person name="Zarelli V.E."/>
            <person name="Dawid I.B."/>
        </authorList>
    </citation>
    <scope>FUNCTION</scope>
    <scope>INTERACTION WITH TFAP2A</scope>
</reference>
<reference key="9">
    <citation type="journal article" date="2023" name="J. Clin. Invest.">
        <title>KCTD1/KCTD15 complexes control ectodermal and neural crest cell functions, and their impairment causes aplasia cutis.</title>
        <authorList>
            <person name="Raymundo J.R."/>
            <person name="Zhang H."/>
            <person name="Smaldone G."/>
            <person name="Zhu W."/>
            <person name="Daly K.E."/>
            <person name="Glennon B.J."/>
            <person name="Pecoraro G."/>
            <person name="Salvatore M."/>
            <person name="Devine W.A."/>
            <person name="Lo C.W."/>
            <person name="Vitagliano L."/>
            <person name="Marneros A.G."/>
        </authorList>
    </citation>
    <scope>INTERACTION WITH KCTD1</scope>
    <scope>SUBCELLULAR LOCATION</scope>
</reference>
<reference evidence="8 9" key="10">
    <citation type="journal article" date="2024" name="J. Med. Genet.">
        <title>BTB domain mutations perturbing KCTD15 oligomerisation cause a distinctive frontonasal dysplasia syndrome.</title>
        <authorList>
            <person name="Miller K.A."/>
            <person name="Cruz Walma D.A."/>
            <person name="Pinkas D.M."/>
            <person name="Tooze R.S."/>
            <person name="Bufton J.C."/>
            <person name="Richardson W."/>
            <person name="Manning C.E."/>
            <person name="Hunt A.E."/>
            <person name="Cros J."/>
            <person name="Hartill V."/>
            <person name="Parker M.J."/>
            <person name="McGowan S.J."/>
            <person name="Twigg S.R.F."/>
            <person name="Chalk R."/>
            <person name="Staunton D."/>
            <person name="Johnson D."/>
            <person name="Wilkie A.O.M."/>
            <person name="Bullock A.N."/>
        </authorList>
    </citation>
    <scope>X-RAY CRYSTALLOGRAPHY (1.94 ANGSTROMS) OF 52-165 OF VARIANT ASP-88</scope>
    <scope>VARIANTS ASP-88 AND HIS-104</scope>
    <scope>CHARACTERIZATION OF VARIANTS ASP-88 AND HIS-104</scope>
    <scope>INVOLVEMENT IN FRONTONASAL DYSPLASIA SYNDROME</scope>
    <scope>SUBUNIT</scope>
    <scope>INTERACTION WITH TFAP2A</scope>
</reference>
<protein>
    <recommendedName>
        <fullName>BTB/POZ domain-containing protein KCTD15</fullName>
    </recommendedName>
    <alternativeName>
        <fullName>Potassium channel tetramerization domain-containing protein 15</fullName>
    </alternativeName>
</protein>